<sequence length="147" mass="16262">MVHFTPEDKTNITSVWTKVDVEDVGGESLARLLVVYPWTQRFFDSFGNLSSASAVMGNPKVKAHGKKVLTSFGEGVKNMDNLKGTFAKLSELHCDKLHVDPENFRLLGNVLIIVLASRFGKEFTPEVQASWQKLVSGVSSALGHKYH</sequence>
<keyword id="KW-0349">Heme</keyword>
<keyword id="KW-0408">Iron</keyword>
<keyword id="KW-0479">Metal-binding</keyword>
<keyword id="KW-0561">Oxygen transport</keyword>
<keyword id="KW-0597">Phosphoprotein</keyword>
<keyword id="KW-0813">Transport</keyword>
<organism>
    <name type="scientific">Didelphis virginiana</name>
    <name type="common">North American opossum</name>
    <name type="synonym">Didelphis marsupialis virginiana</name>
    <dbReference type="NCBI Taxonomy" id="9267"/>
    <lineage>
        <taxon>Eukaryota</taxon>
        <taxon>Metazoa</taxon>
        <taxon>Chordata</taxon>
        <taxon>Craniata</taxon>
        <taxon>Vertebrata</taxon>
        <taxon>Euteleostomi</taxon>
        <taxon>Mammalia</taxon>
        <taxon>Metatheria</taxon>
        <taxon>Didelphimorphia</taxon>
        <taxon>Didelphidae</taxon>
        <taxon>Didelphis</taxon>
    </lineage>
</organism>
<feature type="chain" id="PRO_0000053208" description="Hemoglobin subunit epsilon-M">
    <location>
        <begin position="1"/>
        <end position="147"/>
    </location>
</feature>
<feature type="domain" description="Globin" evidence="2">
    <location>
        <begin position="3"/>
        <end position="147"/>
    </location>
</feature>
<feature type="binding site" description="distal binding residue" evidence="2">
    <location>
        <position position="64"/>
    </location>
    <ligand>
        <name>heme b</name>
        <dbReference type="ChEBI" id="CHEBI:60344"/>
    </ligand>
    <ligandPart>
        <name>Fe</name>
        <dbReference type="ChEBI" id="CHEBI:18248"/>
    </ligandPart>
</feature>
<feature type="binding site" description="proximal binding residue" evidence="2">
    <location>
        <position position="93"/>
    </location>
    <ligand>
        <name>heme b</name>
        <dbReference type="ChEBI" id="CHEBI:60344"/>
    </ligand>
    <ligandPart>
        <name>Fe</name>
        <dbReference type="ChEBI" id="CHEBI:18248"/>
    </ligandPart>
</feature>
<feature type="modified residue" description="Phosphoserine" evidence="1">
    <location>
        <position position="14"/>
    </location>
</feature>
<feature type="modified residue" description="Phosphoserine" evidence="1">
    <location>
        <position position="51"/>
    </location>
</feature>
<dbReference type="EMBL" id="J03642">
    <property type="protein sequence ID" value="AAA30977.1"/>
    <property type="molecule type" value="Genomic_DNA"/>
</dbReference>
<dbReference type="PIR" id="A30213">
    <property type="entry name" value="A30213"/>
</dbReference>
<dbReference type="SMR" id="P11025"/>
<dbReference type="GO" id="GO:0072562">
    <property type="term" value="C:blood microparticle"/>
    <property type="evidence" value="ECO:0007669"/>
    <property type="project" value="TreeGrafter"/>
</dbReference>
<dbReference type="GO" id="GO:0031838">
    <property type="term" value="C:haptoglobin-hemoglobin complex"/>
    <property type="evidence" value="ECO:0007669"/>
    <property type="project" value="TreeGrafter"/>
</dbReference>
<dbReference type="GO" id="GO:0005833">
    <property type="term" value="C:hemoglobin complex"/>
    <property type="evidence" value="ECO:0007669"/>
    <property type="project" value="InterPro"/>
</dbReference>
<dbReference type="GO" id="GO:0031720">
    <property type="term" value="F:haptoglobin binding"/>
    <property type="evidence" value="ECO:0007669"/>
    <property type="project" value="TreeGrafter"/>
</dbReference>
<dbReference type="GO" id="GO:0020037">
    <property type="term" value="F:heme binding"/>
    <property type="evidence" value="ECO:0007669"/>
    <property type="project" value="InterPro"/>
</dbReference>
<dbReference type="GO" id="GO:0046872">
    <property type="term" value="F:metal ion binding"/>
    <property type="evidence" value="ECO:0007669"/>
    <property type="project" value="UniProtKB-KW"/>
</dbReference>
<dbReference type="GO" id="GO:0043177">
    <property type="term" value="F:organic acid binding"/>
    <property type="evidence" value="ECO:0007669"/>
    <property type="project" value="TreeGrafter"/>
</dbReference>
<dbReference type="GO" id="GO:0019825">
    <property type="term" value="F:oxygen binding"/>
    <property type="evidence" value="ECO:0007669"/>
    <property type="project" value="InterPro"/>
</dbReference>
<dbReference type="GO" id="GO:0005344">
    <property type="term" value="F:oxygen carrier activity"/>
    <property type="evidence" value="ECO:0007669"/>
    <property type="project" value="UniProtKB-KW"/>
</dbReference>
<dbReference type="GO" id="GO:0004601">
    <property type="term" value="F:peroxidase activity"/>
    <property type="evidence" value="ECO:0007669"/>
    <property type="project" value="TreeGrafter"/>
</dbReference>
<dbReference type="GO" id="GO:0042744">
    <property type="term" value="P:hydrogen peroxide catabolic process"/>
    <property type="evidence" value="ECO:0007669"/>
    <property type="project" value="TreeGrafter"/>
</dbReference>
<dbReference type="CDD" id="cd08925">
    <property type="entry name" value="Hb-beta-like"/>
    <property type="match status" value="1"/>
</dbReference>
<dbReference type="FunFam" id="1.10.490.10:FF:000001">
    <property type="entry name" value="Hemoglobin subunit beta"/>
    <property type="match status" value="1"/>
</dbReference>
<dbReference type="Gene3D" id="1.10.490.10">
    <property type="entry name" value="Globins"/>
    <property type="match status" value="1"/>
</dbReference>
<dbReference type="InterPro" id="IPR000971">
    <property type="entry name" value="Globin"/>
</dbReference>
<dbReference type="InterPro" id="IPR009050">
    <property type="entry name" value="Globin-like_sf"/>
</dbReference>
<dbReference type="InterPro" id="IPR012292">
    <property type="entry name" value="Globin/Proto"/>
</dbReference>
<dbReference type="InterPro" id="IPR002337">
    <property type="entry name" value="Hemoglobin_b"/>
</dbReference>
<dbReference type="InterPro" id="IPR050056">
    <property type="entry name" value="Hemoglobin_oxygen_transport"/>
</dbReference>
<dbReference type="PANTHER" id="PTHR11442">
    <property type="entry name" value="HEMOGLOBIN FAMILY MEMBER"/>
    <property type="match status" value="1"/>
</dbReference>
<dbReference type="PANTHER" id="PTHR11442:SF7">
    <property type="entry name" value="HEMOGLOBIN SUBUNIT EPSILON"/>
    <property type="match status" value="1"/>
</dbReference>
<dbReference type="Pfam" id="PF00042">
    <property type="entry name" value="Globin"/>
    <property type="match status" value="1"/>
</dbReference>
<dbReference type="PRINTS" id="PR00814">
    <property type="entry name" value="BETAHAEM"/>
</dbReference>
<dbReference type="SUPFAM" id="SSF46458">
    <property type="entry name" value="Globin-like"/>
    <property type="match status" value="1"/>
</dbReference>
<dbReference type="PROSITE" id="PS01033">
    <property type="entry name" value="GLOBIN"/>
    <property type="match status" value="1"/>
</dbReference>
<name>HBE_DIDVI</name>
<comment type="function">
    <text>Hemoglobin epsilon chain is a beta-type chain found in early embryos.</text>
</comment>
<comment type="tissue specificity">
    <text>Red blood cells.</text>
</comment>
<comment type="similarity">
    <text evidence="2">Belongs to the globin family.</text>
</comment>
<gene>
    <name type="primary">HBE1</name>
</gene>
<proteinExistence type="evidence at transcript level"/>
<evidence type="ECO:0000250" key="1">
    <source>
        <dbReference type="UniProtKB" id="P02100"/>
    </source>
</evidence>
<evidence type="ECO:0000255" key="2">
    <source>
        <dbReference type="PROSITE-ProRule" id="PRU00238"/>
    </source>
</evidence>
<reference key="1">
    <citation type="journal article" date="1988" name="Proc. Natl. Acad. Sci. U.S.A.">
        <title>Evolutionary and developmental aspects of two hemoglobin beta-chain genes (epsilon M and beta M) of opossum.</title>
        <authorList>
            <person name="Koop B."/>
            <person name="Goodman M."/>
        </authorList>
    </citation>
    <scope>NUCLEOTIDE SEQUENCE [GENOMIC DNA]</scope>
</reference>
<protein>
    <recommendedName>
        <fullName>Hemoglobin subunit epsilon-M</fullName>
    </recommendedName>
    <alternativeName>
        <fullName>Epsilon-M-globin</fullName>
    </alternativeName>
    <alternativeName>
        <fullName>Hemoglobin epsilon-M chain</fullName>
    </alternativeName>
</protein>
<accession>P11025</accession>